<organism>
    <name type="scientific">Rhodopirellula baltica (strain DSM 10527 / NCIMB 13988 / SH1)</name>
    <dbReference type="NCBI Taxonomy" id="243090"/>
    <lineage>
        <taxon>Bacteria</taxon>
        <taxon>Pseudomonadati</taxon>
        <taxon>Planctomycetota</taxon>
        <taxon>Planctomycetia</taxon>
        <taxon>Pirellulales</taxon>
        <taxon>Pirellulaceae</taxon>
        <taxon>Rhodopirellula</taxon>
    </lineage>
</organism>
<dbReference type="EMBL" id="BX294147">
    <property type="protein sequence ID" value="CAD78547.1"/>
    <property type="molecule type" value="Genomic_DNA"/>
</dbReference>
<dbReference type="RefSeq" id="NP_868269.1">
    <property type="nucleotide sequence ID" value="NC_005027.1"/>
</dbReference>
<dbReference type="SMR" id="Q7UFY2"/>
<dbReference type="FunCoup" id="Q7UFY2">
    <property type="interactions" value="263"/>
</dbReference>
<dbReference type="STRING" id="243090.RB8260"/>
<dbReference type="EnsemblBacteria" id="CAD78547">
    <property type="protein sequence ID" value="CAD78547"/>
    <property type="gene ID" value="RB8260"/>
</dbReference>
<dbReference type="KEGG" id="rba:RB8260"/>
<dbReference type="PATRIC" id="fig|243090.15.peg.3979"/>
<dbReference type="eggNOG" id="COG1872">
    <property type="taxonomic scope" value="Bacteria"/>
</dbReference>
<dbReference type="HOGENOM" id="CLU_130694_3_0_0"/>
<dbReference type="InParanoid" id="Q7UFY2"/>
<dbReference type="OrthoDB" id="290224at2"/>
<dbReference type="Proteomes" id="UP000001025">
    <property type="component" value="Chromosome"/>
</dbReference>
<dbReference type="GO" id="GO:0005737">
    <property type="term" value="C:cytoplasm"/>
    <property type="evidence" value="ECO:0000318"/>
    <property type="project" value="GO_Central"/>
</dbReference>
<dbReference type="Gene3D" id="3.30.1200.10">
    <property type="entry name" value="YggU-like"/>
    <property type="match status" value="1"/>
</dbReference>
<dbReference type="HAMAP" id="MF_00634">
    <property type="entry name" value="UPF0235"/>
    <property type="match status" value="1"/>
</dbReference>
<dbReference type="InterPro" id="IPR003746">
    <property type="entry name" value="DUF167"/>
</dbReference>
<dbReference type="InterPro" id="IPR036591">
    <property type="entry name" value="YggU-like_sf"/>
</dbReference>
<dbReference type="NCBIfam" id="TIGR00251">
    <property type="entry name" value="DUF167 family protein"/>
    <property type="match status" value="1"/>
</dbReference>
<dbReference type="PANTHER" id="PTHR13420">
    <property type="entry name" value="UPF0235 PROTEIN C15ORF40"/>
    <property type="match status" value="1"/>
</dbReference>
<dbReference type="PANTHER" id="PTHR13420:SF7">
    <property type="entry name" value="UPF0235 PROTEIN C15ORF40"/>
    <property type="match status" value="1"/>
</dbReference>
<dbReference type="Pfam" id="PF02594">
    <property type="entry name" value="DUF167"/>
    <property type="match status" value="1"/>
</dbReference>
<dbReference type="SMART" id="SM01152">
    <property type="entry name" value="DUF167"/>
    <property type="match status" value="1"/>
</dbReference>
<dbReference type="SUPFAM" id="SSF69786">
    <property type="entry name" value="YggU-like"/>
    <property type="match status" value="1"/>
</dbReference>
<evidence type="ECO:0000255" key="1">
    <source>
        <dbReference type="HAMAP-Rule" id="MF_00634"/>
    </source>
</evidence>
<proteinExistence type="inferred from homology"/>
<feature type="chain" id="PRO_0000139451" description="UPF0235 protein RB8260">
    <location>
        <begin position="1"/>
        <end position="108"/>
    </location>
</feature>
<reference key="1">
    <citation type="journal article" date="2003" name="Proc. Natl. Acad. Sci. U.S.A.">
        <title>Complete genome sequence of the marine planctomycete Pirellula sp. strain 1.</title>
        <authorList>
            <person name="Gloeckner F.O."/>
            <person name="Kube M."/>
            <person name="Bauer M."/>
            <person name="Teeling H."/>
            <person name="Lombardot T."/>
            <person name="Ludwig W."/>
            <person name="Gade D."/>
            <person name="Beck A."/>
            <person name="Borzym K."/>
            <person name="Heitmann K."/>
            <person name="Rabus R."/>
            <person name="Schlesner H."/>
            <person name="Amann R."/>
            <person name="Reinhardt R."/>
        </authorList>
    </citation>
    <scope>NUCLEOTIDE SEQUENCE [LARGE SCALE GENOMIC DNA]</scope>
    <source>
        <strain>DSM 10527 / NCIMB 13988 / SH1</strain>
    </source>
</reference>
<accession>Q7UFY2</accession>
<comment type="similarity">
    <text evidence="1">Belongs to the UPF0235 family.</text>
</comment>
<name>Y8260_RHOBA</name>
<protein>
    <recommendedName>
        <fullName evidence="1">UPF0235 protein RB8260</fullName>
    </recommendedName>
</protein>
<sequence>MMSEPGAGLDRQCDGLTWRFRVRVTPKAKKASVGGLHDGALKVSVHTVPEDGKANKAVIASLAKWLRVSKGRVAIVAGETSRLKTIVVEFKSQDEMNTADAKLKKELS</sequence>
<gene>
    <name type="ordered locus">RB8260</name>
</gene>
<keyword id="KW-1185">Reference proteome</keyword>